<gene>
    <name evidence="1" type="primary">nuoD1</name>
    <name type="ordered locus">RoseRS_2992</name>
</gene>
<feature type="chain" id="PRO_0000357918" description="NADH-quinone oxidoreductase subunit D 1">
    <location>
        <begin position="1"/>
        <end position="374"/>
    </location>
</feature>
<keyword id="KW-1003">Cell membrane</keyword>
<keyword id="KW-0472">Membrane</keyword>
<keyword id="KW-0520">NAD</keyword>
<keyword id="KW-0874">Quinone</keyword>
<keyword id="KW-1278">Translocase</keyword>
<keyword id="KW-0813">Transport</keyword>
<keyword id="KW-0830">Ubiquinone</keyword>
<organism>
    <name type="scientific">Roseiflexus sp. (strain RS-1)</name>
    <dbReference type="NCBI Taxonomy" id="357808"/>
    <lineage>
        <taxon>Bacteria</taxon>
        <taxon>Bacillati</taxon>
        <taxon>Chloroflexota</taxon>
        <taxon>Chloroflexia</taxon>
        <taxon>Chloroflexales</taxon>
        <taxon>Roseiflexineae</taxon>
        <taxon>Roseiflexaceae</taxon>
        <taxon>Roseiflexus</taxon>
    </lineage>
</organism>
<sequence>MLQTQELQINIGPQHPSTHGVFRMIVTVDGETIVDLKPVFGYLHRNHEQLAEVSTYIQSMPYTDRLDYFNSMANNHALALAVEKLAGISVPQRAEYIRVLMVELTRILNHASAVGFLLNDMGAWQTPLMFGMREREKILDLFEMASGARMMCNYFRFGGVWRDLPPEFIPQLKELMQGLPSFFDEFERLLKENEILLSRTINVGVLPKEVAVSYSVTGPVLRASGIPYDVRRAEPYSVYDELDFDIPIGSVGDVYDRFLIRIEEMRQSYRILQQVIERLPDTTGGHINPAMANIGKQKALRPPPGDAYARIESPKGELGFYLVSDGSERPYRYKVRAPSFINLTPLGDMCRGHKVADVVVILGSIDIVMGEVDK</sequence>
<proteinExistence type="inferred from homology"/>
<evidence type="ECO:0000255" key="1">
    <source>
        <dbReference type="HAMAP-Rule" id="MF_01358"/>
    </source>
</evidence>
<accession>A5UXK3</accession>
<dbReference type="EC" id="7.1.1.-" evidence="1"/>
<dbReference type="EMBL" id="CP000686">
    <property type="protein sequence ID" value="ABQ91356.1"/>
    <property type="molecule type" value="Genomic_DNA"/>
</dbReference>
<dbReference type="RefSeq" id="WP_011957700.1">
    <property type="nucleotide sequence ID" value="NC_009523.1"/>
</dbReference>
<dbReference type="SMR" id="A5UXK3"/>
<dbReference type="STRING" id="357808.RoseRS_2992"/>
<dbReference type="KEGG" id="rrs:RoseRS_2992"/>
<dbReference type="eggNOG" id="COG0649">
    <property type="taxonomic scope" value="Bacteria"/>
</dbReference>
<dbReference type="HOGENOM" id="CLU_015134_1_2_0"/>
<dbReference type="OrthoDB" id="9801496at2"/>
<dbReference type="Proteomes" id="UP000006554">
    <property type="component" value="Chromosome"/>
</dbReference>
<dbReference type="GO" id="GO:0005886">
    <property type="term" value="C:plasma membrane"/>
    <property type="evidence" value="ECO:0007669"/>
    <property type="project" value="UniProtKB-SubCell"/>
</dbReference>
<dbReference type="GO" id="GO:0051287">
    <property type="term" value="F:NAD binding"/>
    <property type="evidence" value="ECO:0007669"/>
    <property type="project" value="InterPro"/>
</dbReference>
<dbReference type="GO" id="GO:0050136">
    <property type="term" value="F:NADH:ubiquinone reductase (non-electrogenic) activity"/>
    <property type="evidence" value="ECO:0007669"/>
    <property type="project" value="UniProtKB-UniRule"/>
</dbReference>
<dbReference type="GO" id="GO:0048038">
    <property type="term" value="F:quinone binding"/>
    <property type="evidence" value="ECO:0007669"/>
    <property type="project" value="UniProtKB-KW"/>
</dbReference>
<dbReference type="Gene3D" id="1.10.645.10">
    <property type="entry name" value="Cytochrome-c3 Hydrogenase, chain B"/>
    <property type="match status" value="1"/>
</dbReference>
<dbReference type="HAMAP" id="MF_01358">
    <property type="entry name" value="NDH1_NuoD"/>
    <property type="match status" value="1"/>
</dbReference>
<dbReference type="InterPro" id="IPR001135">
    <property type="entry name" value="NADH_Q_OxRdtase_suD"/>
</dbReference>
<dbReference type="InterPro" id="IPR022885">
    <property type="entry name" value="NDH1_su_D/H"/>
</dbReference>
<dbReference type="InterPro" id="IPR029014">
    <property type="entry name" value="NiFe-Hase_large"/>
</dbReference>
<dbReference type="NCBIfam" id="NF004739">
    <property type="entry name" value="PRK06075.1"/>
    <property type="match status" value="1"/>
</dbReference>
<dbReference type="PANTHER" id="PTHR11993:SF10">
    <property type="entry name" value="NADH DEHYDROGENASE [UBIQUINONE] IRON-SULFUR PROTEIN 2, MITOCHONDRIAL"/>
    <property type="match status" value="1"/>
</dbReference>
<dbReference type="PANTHER" id="PTHR11993">
    <property type="entry name" value="NADH-UBIQUINONE OXIDOREDUCTASE 49 KDA SUBUNIT"/>
    <property type="match status" value="1"/>
</dbReference>
<dbReference type="Pfam" id="PF00346">
    <property type="entry name" value="Complex1_49kDa"/>
    <property type="match status" value="1"/>
</dbReference>
<dbReference type="SUPFAM" id="SSF56762">
    <property type="entry name" value="HydB/Nqo4-like"/>
    <property type="match status" value="1"/>
</dbReference>
<protein>
    <recommendedName>
        <fullName evidence="1">NADH-quinone oxidoreductase subunit D 1</fullName>
        <ecNumber evidence="1">7.1.1.-</ecNumber>
    </recommendedName>
    <alternativeName>
        <fullName evidence="1">NADH dehydrogenase I subunit D 1</fullName>
    </alternativeName>
    <alternativeName>
        <fullName evidence="1">NDH-1 subunit D 1</fullName>
    </alternativeName>
</protein>
<reference key="1">
    <citation type="submission" date="2007-04" db="EMBL/GenBank/DDBJ databases">
        <title>Complete sequence of Roseiflexus sp. RS-1.</title>
        <authorList>
            <consortium name="US DOE Joint Genome Institute"/>
            <person name="Copeland A."/>
            <person name="Lucas S."/>
            <person name="Lapidus A."/>
            <person name="Barry K."/>
            <person name="Detter J.C."/>
            <person name="Glavina del Rio T."/>
            <person name="Hammon N."/>
            <person name="Israni S."/>
            <person name="Dalin E."/>
            <person name="Tice H."/>
            <person name="Pitluck S."/>
            <person name="Chertkov O."/>
            <person name="Brettin T."/>
            <person name="Bruce D."/>
            <person name="Han C."/>
            <person name="Schmutz J."/>
            <person name="Larimer F."/>
            <person name="Land M."/>
            <person name="Hauser L."/>
            <person name="Kyrpides N."/>
            <person name="Mikhailova N."/>
            <person name="Bryant D.A."/>
            <person name="Richardson P."/>
        </authorList>
    </citation>
    <scope>NUCLEOTIDE SEQUENCE [LARGE SCALE GENOMIC DNA]</scope>
    <source>
        <strain>RS-1</strain>
    </source>
</reference>
<comment type="function">
    <text evidence="1">NDH-1 shuttles electrons from NADH, via FMN and iron-sulfur (Fe-S) centers, to quinones in the respiratory chain. The immediate electron acceptor for the enzyme in this species is believed to be ubiquinone. Couples the redox reaction to proton translocation (for every two electrons transferred, four hydrogen ions are translocated across the cytoplasmic membrane), and thus conserves the redox energy in a proton gradient.</text>
</comment>
<comment type="catalytic activity">
    <reaction evidence="1">
        <text>a quinone + NADH + 5 H(+)(in) = a quinol + NAD(+) + 4 H(+)(out)</text>
        <dbReference type="Rhea" id="RHEA:57888"/>
        <dbReference type="ChEBI" id="CHEBI:15378"/>
        <dbReference type="ChEBI" id="CHEBI:24646"/>
        <dbReference type="ChEBI" id="CHEBI:57540"/>
        <dbReference type="ChEBI" id="CHEBI:57945"/>
        <dbReference type="ChEBI" id="CHEBI:132124"/>
    </reaction>
</comment>
<comment type="subunit">
    <text evidence="1">NDH-1 is composed of 14 different subunits. Subunits NuoB, C, D, E, F, and G constitute the peripheral sector of the complex.</text>
</comment>
<comment type="subcellular location">
    <subcellularLocation>
        <location evidence="1">Cell membrane</location>
        <topology evidence="1">Peripheral membrane protein</topology>
        <orientation evidence="1">Cytoplasmic side</orientation>
    </subcellularLocation>
</comment>
<comment type="similarity">
    <text evidence="1">Belongs to the complex I 49 kDa subunit family.</text>
</comment>
<name>NUOD1_ROSS1</name>